<comment type="function">
    <text evidence="1">Catalyzes the formation of CDP-2,3-bis-(O-geranylgeranyl)-sn-glycerol (CDP-archaeol) from 2,3-bis-(O-geranylgeranyl)-sn-glycerol 1-phosphate (DGGGP) and CTP. This reaction is the third ether-bond-formation step in the biosynthesis of archaeal membrane lipids.</text>
</comment>
<comment type="catalytic activity">
    <reaction evidence="1">
        <text>2,3-bis-O-(geranylgeranyl)-sn-glycerol 1-phosphate + CTP + H(+) = CDP-2,3-bis-O-(geranylgeranyl)-sn-glycerol + diphosphate</text>
        <dbReference type="Rhea" id="RHEA:25690"/>
        <dbReference type="ChEBI" id="CHEBI:15378"/>
        <dbReference type="ChEBI" id="CHEBI:33019"/>
        <dbReference type="ChEBI" id="CHEBI:37563"/>
        <dbReference type="ChEBI" id="CHEBI:58837"/>
        <dbReference type="ChEBI" id="CHEBI:58838"/>
        <dbReference type="EC" id="2.7.7.67"/>
    </reaction>
</comment>
<comment type="cofactor">
    <cofactor evidence="1">
        <name>Mg(2+)</name>
        <dbReference type="ChEBI" id="CHEBI:18420"/>
    </cofactor>
</comment>
<comment type="pathway">
    <text evidence="1">Membrane lipid metabolism; glycerophospholipid metabolism.</text>
</comment>
<comment type="subcellular location">
    <subcellularLocation>
        <location evidence="1">Cell membrane</location>
        <topology evidence="1">Multi-pass membrane protein</topology>
    </subcellularLocation>
</comment>
<comment type="similarity">
    <text evidence="1">Belongs to the CDP-archaeol synthase family.</text>
</comment>
<keyword id="KW-1003">Cell membrane</keyword>
<keyword id="KW-0444">Lipid biosynthesis</keyword>
<keyword id="KW-0443">Lipid metabolism</keyword>
<keyword id="KW-0460">Magnesium</keyword>
<keyword id="KW-0472">Membrane</keyword>
<keyword id="KW-0594">Phospholipid biosynthesis</keyword>
<keyword id="KW-1208">Phospholipid metabolism</keyword>
<keyword id="KW-1185">Reference proteome</keyword>
<keyword id="KW-0808">Transferase</keyword>
<keyword id="KW-0812">Transmembrane</keyword>
<keyword id="KW-1133">Transmembrane helix</keyword>
<evidence type="ECO:0000255" key="1">
    <source>
        <dbReference type="HAMAP-Rule" id="MF_01117"/>
    </source>
</evidence>
<gene>
    <name evidence="1" type="primary">carS</name>
    <name type="ordered locus">MA_3306</name>
</gene>
<protein>
    <recommendedName>
        <fullName evidence="1">CDP-archaeol synthase</fullName>
        <ecNumber evidence="1">2.7.7.67</ecNumber>
    </recommendedName>
    <alternativeName>
        <fullName evidence="1">CDP-2,3-bis-(O-geranylgeranyl)-sn-glycerol synthase</fullName>
    </alternativeName>
</protein>
<proteinExistence type="inferred from homology"/>
<name>CDPAS_METAC</name>
<dbReference type="EC" id="2.7.7.67" evidence="1"/>
<dbReference type="EMBL" id="AE010299">
    <property type="protein sequence ID" value="AAM06676.1"/>
    <property type="molecule type" value="Genomic_DNA"/>
</dbReference>
<dbReference type="RefSeq" id="WP_011023239.1">
    <property type="nucleotide sequence ID" value="NC_003552.1"/>
</dbReference>
<dbReference type="SMR" id="Q8TKT8"/>
<dbReference type="FunCoup" id="Q8TKT8">
    <property type="interactions" value="1"/>
</dbReference>
<dbReference type="STRING" id="188937.MA_3306"/>
<dbReference type="EnsemblBacteria" id="AAM06676">
    <property type="protein sequence ID" value="AAM06676"/>
    <property type="gene ID" value="MA_3306"/>
</dbReference>
<dbReference type="GeneID" id="1475199"/>
<dbReference type="KEGG" id="mac:MA_3306"/>
<dbReference type="HOGENOM" id="CLU_105710_0_0_2"/>
<dbReference type="InParanoid" id="Q8TKT8"/>
<dbReference type="OrthoDB" id="45383at2157"/>
<dbReference type="PhylomeDB" id="Q8TKT8"/>
<dbReference type="UniPathway" id="UPA00940"/>
<dbReference type="Proteomes" id="UP000002487">
    <property type="component" value="Chromosome"/>
</dbReference>
<dbReference type="GO" id="GO:0005886">
    <property type="term" value="C:plasma membrane"/>
    <property type="evidence" value="ECO:0007669"/>
    <property type="project" value="UniProtKB-SubCell"/>
</dbReference>
<dbReference type="GO" id="GO:0043338">
    <property type="term" value="F:CDP-2,3-bis-(O-geranylgeranyl)-sn-glycerol synthase activity"/>
    <property type="evidence" value="ECO:0007669"/>
    <property type="project" value="UniProtKB-EC"/>
</dbReference>
<dbReference type="GO" id="GO:0046474">
    <property type="term" value="P:glycerophospholipid biosynthetic process"/>
    <property type="evidence" value="ECO:0007669"/>
    <property type="project" value="UniProtKB-UniRule"/>
</dbReference>
<dbReference type="HAMAP" id="MF_01117">
    <property type="entry name" value="CDP_archaeol_synth"/>
    <property type="match status" value="1"/>
</dbReference>
<dbReference type="InterPro" id="IPR032690">
    <property type="entry name" value="CarS"/>
</dbReference>
<dbReference type="InterPro" id="IPR002726">
    <property type="entry name" value="CarS_archaea"/>
</dbReference>
<dbReference type="NCBIfam" id="NF003114">
    <property type="entry name" value="PRK04032.1"/>
    <property type="match status" value="1"/>
</dbReference>
<dbReference type="PANTHER" id="PTHR39650">
    <property type="entry name" value="CDP-ARCHAEOL SYNTHASE"/>
    <property type="match status" value="1"/>
</dbReference>
<dbReference type="PANTHER" id="PTHR39650:SF1">
    <property type="entry name" value="CDP-ARCHAEOL SYNTHASE"/>
    <property type="match status" value="1"/>
</dbReference>
<dbReference type="Pfam" id="PF01864">
    <property type="entry name" value="CarS-like"/>
    <property type="match status" value="1"/>
</dbReference>
<accession>Q8TKT8</accession>
<organism>
    <name type="scientific">Methanosarcina acetivorans (strain ATCC 35395 / DSM 2834 / JCM 12185 / C2A)</name>
    <dbReference type="NCBI Taxonomy" id="188937"/>
    <lineage>
        <taxon>Archaea</taxon>
        <taxon>Methanobacteriati</taxon>
        <taxon>Methanobacteriota</taxon>
        <taxon>Stenosarchaea group</taxon>
        <taxon>Methanomicrobia</taxon>
        <taxon>Methanosarcinales</taxon>
        <taxon>Methanosarcinaceae</taxon>
        <taxon>Methanosarcina</taxon>
    </lineage>
</organism>
<feature type="chain" id="PRO_0000094169" description="CDP-archaeol synthase">
    <location>
        <begin position="1"/>
        <end position="175"/>
    </location>
</feature>
<feature type="transmembrane region" description="Helical" evidence="1">
    <location>
        <begin position="41"/>
        <end position="61"/>
    </location>
</feature>
<feature type="transmembrane region" description="Helical" evidence="1">
    <location>
        <begin position="78"/>
        <end position="98"/>
    </location>
</feature>
<feature type="transmembrane region" description="Helical" evidence="1">
    <location>
        <begin position="122"/>
        <end position="142"/>
    </location>
</feature>
<feature type="transmembrane region" description="Helical" evidence="1">
    <location>
        <begin position="150"/>
        <end position="170"/>
    </location>
</feature>
<sequence>MLPAYLSNPFAAVFGGGKPIDGGRTYKDGRRILGDGKTYRGLFSGIFCGFLAGCIEIWLSMRGFEIMGIKMPTFGPNYASALIVVLALPSGALFGDMFKSFFKRRMGLKRGASLPLVDQLDFVVGAWFFTYLAAPEWFVSNFTTGIALTVLIMTPLLHLTTNIIGYFIGVKKEPW</sequence>
<reference key="1">
    <citation type="journal article" date="2002" name="Genome Res.">
        <title>The genome of Methanosarcina acetivorans reveals extensive metabolic and physiological diversity.</title>
        <authorList>
            <person name="Galagan J.E."/>
            <person name="Nusbaum C."/>
            <person name="Roy A."/>
            <person name="Endrizzi M.G."/>
            <person name="Macdonald P."/>
            <person name="FitzHugh W."/>
            <person name="Calvo S."/>
            <person name="Engels R."/>
            <person name="Smirnov S."/>
            <person name="Atnoor D."/>
            <person name="Brown A."/>
            <person name="Allen N."/>
            <person name="Naylor J."/>
            <person name="Stange-Thomann N."/>
            <person name="DeArellano K."/>
            <person name="Johnson R."/>
            <person name="Linton L."/>
            <person name="McEwan P."/>
            <person name="McKernan K."/>
            <person name="Talamas J."/>
            <person name="Tirrell A."/>
            <person name="Ye W."/>
            <person name="Zimmer A."/>
            <person name="Barber R.D."/>
            <person name="Cann I."/>
            <person name="Graham D.E."/>
            <person name="Grahame D.A."/>
            <person name="Guss A.M."/>
            <person name="Hedderich R."/>
            <person name="Ingram-Smith C."/>
            <person name="Kuettner H.C."/>
            <person name="Krzycki J.A."/>
            <person name="Leigh J.A."/>
            <person name="Li W."/>
            <person name="Liu J."/>
            <person name="Mukhopadhyay B."/>
            <person name="Reeve J.N."/>
            <person name="Smith K."/>
            <person name="Springer T.A."/>
            <person name="Umayam L.A."/>
            <person name="White O."/>
            <person name="White R.H."/>
            <person name="de Macario E.C."/>
            <person name="Ferry J.G."/>
            <person name="Jarrell K.F."/>
            <person name="Jing H."/>
            <person name="Macario A.J.L."/>
            <person name="Paulsen I.T."/>
            <person name="Pritchett M."/>
            <person name="Sowers K.R."/>
            <person name="Swanson R.V."/>
            <person name="Zinder S.H."/>
            <person name="Lander E."/>
            <person name="Metcalf W.W."/>
            <person name="Birren B."/>
        </authorList>
    </citation>
    <scope>NUCLEOTIDE SEQUENCE [LARGE SCALE GENOMIC DNA]</scope>
    <source>
        <strain>ATCC 35395 / DSM 2834 / JCM 12185 / C2A</strain>
    </source>
</reference>